<sequence>MVPVLLALLLLLGPAVSEETQAGNYSLSFLYTGLSKPREGFPSFQAVAYLNDQPFFHYNSEGRRAEPLAPWSQVEGMEDWEKESALQRAREDIFMETLSDIMDYYKDREGSHTFQGAFGCELRNNESSGAFWGYAYDGQDFIKFDKEIPAWVPLDPAAQNTKRKWEAEAVYVQRAKAYLEEECPGMLRRYLPYSRTHLDRQESPSVSVTGHAAPGHKRTLKCLAYDFYPRSIGLHWTRAGDAQEAESGGDVLPSGNGTYQSWVVVGVPPEDQAPYSCHVEHRSLTRPLTVPWDPRQQAE</sequence>
<protein>
    <recommendedName>
        <fullName>Zinc-alpha-2-glycoprotein</fullName>
        <shortName>Zn-alpha-2-GP</shortName>
        <shortName>Zn-alpha-2-glycoprotein</shortName>
    </recommendedName>
</protein>
<feature type="signal peptide" evidence="2">
    <location>
        <begin position="1"/>
        <end position="17"/>
    </location>
</feature>
<feature type="chain" id="PRO_0000317709" description="Zinc-alpha-2-glycoprotein">
    <location>
        <begin position="18"/>
        <end position="299"/>
    </location>
</feature>
<feature type="domain" description="Ig-like C1-type">
    <location>
        <begin position="204"/>
        <end position="289"/>
    </location>
</feature>
<feature type="glycosylation site" description="N-linked (GlcNAc...) asparagine" evidence="2">
    <location>
        <position position="24"/>
    </location>
</feature>
<feature type="glycosylation site" description="N-linked (GlcNAc...) asparagine" evidence="2">
    <location>
        <position position="125"/>
    </location>
</feature>
<feature type="glycosylation site" description="N-linked (GlcNAc...) asparagine" evidence="2">
    <location>
        <position position="256"/>
    </location>
</feature>
<feature type="disulfide bond" evidence="3">
    <location>
        <begin position="120"/>
        <end position="183"/>
    </location>
</feature>
<feature type="disulfide bond" evidence="3">
    <location>
        <begin position="222"/>
        <end position="277"/>
    </location>
</feature>
<comment type="function">
    <text evidence="1">Stimulates lipid degradation in adipocytes and causes the extensive fat losses associated with some advanced cancers.</text>
</comment>
<comment type="subunit">
    <text evidence="1">Interacts with PIP.</text>
</comment>
<comment type="subcellular location">
    <subcellularLocation>
        <location evidence="1">Secreted</location>
    </subcellularLocation>
</comment>
<comment type="similarity">
    <text evidence="4">Belongs to the MHC class I family.</text>
</comment>
<gene>
    <name type="primary">AZGP1</name>
</gene>
<reference key="1">
    <citation type="submission" date="2005-08" db="EMBL/GenBank/DDBJ databases">
        <authorList>
            <consortium name="NIH - Mammalian Gene Collection (MGC) project"/>
        </authorList>
    </citation>
    <scope>NUCLEOTIDE SEQUENCE [LARGE SCALE MRNA]</scope>
    <source>
        <strain>Hereford</strain>
        <tissue>Mammary gland</tissue>
    </source>
</reference>
<name>ZA2G_BOVIN</name>
<evidence type="ECO:0000250" key="1"/>
<evidence type="ECO:0000255" key="2"/>
<evidence type="ECO:0000255" key="3">
    <source>
        <dbReference type="PROSITE-ProRule" id="PRU00114"/>
    </source>
</evidence>
<evidence type="ECO:0000305" key="4"/>
<accession>Q3ZCH5</accession>
<dbReference type="EMBL" id="BC102237">
    <property type="protein sequence ID" value="AAI02238.1"/>
    <property type="molecule type" value="mRNA"/>
</dbReference>
<dbReference type="RefSeq" id="NP_001029503.1">
    <property type="nucleotide sequence ID" value="NM_001034331.1"/>
</dbReference>
<dbReference type="SMR" id="Q3ZCH5"/>
<dbReference type="FunCoup" id="Q3ZCH5">
    <property type="interactions" value="119"/>
</dbReference>
<dbReference type="STRING" id="9913.ENSBTAP00000037042"/>
<dbReference type="GlyCosmos" id="Q3ZCH5">
    <property type="glycosylation" value="3 sites, No reported glycans"/>
</dbReference>
<dbReference type="GlyGen" id="Q3ZCH5">
    <property type="glycosylation" value="3 sites"/>
</dbReference>
<dbReference type="PaxDb" id="9913-ENSBTAP00000037042"/>
<dbReference type="PeptideAtlas" id="Q3ZCH5"/>
<dbReference type="GeneID" id="508800"/>
<dbReference type="KEGG" id="bta:508800"/>
<dbReference type="CTD" id="563"/>
<dbReference type="eggNOG" id="ENOG502RWW3">
    <property type="taxonomic scope" value="Eukaryota"/>
</dbReference>
<dbReference type="HOGENOM" id="CLU_047501_0_1_1"/>
<dbReference type="InParanoid" id="Q3ZCH5"/>
<dbReference type="OrthoDB" id="8936120at2759"/>
<dbReference type="TreeFam" id="TF336617"/>
<dbReference type="Proteomes" id="UP000009136">
    <property type="component" value="Unplaced"/>
</dbReference>
<dbReference type="GO" id="GO:0009897">
    <property type="term" value="C:external side of plasma membrane"/>
    <property type="evidence" value="ECO:0000318"/>
    <property type="project" value="GO_Central"/>
</dbReference>
<dbReference type="GO" id="GO:0005615">
    <property type="term" value="C:extracellular space"/>
    <property type="evidence" value="ECO:0000318"/>
    <property type="project" value="GO_Central"/>
</dbReference>
<dbReference type="GO" id="GO:0002486">
    <property type="term" value="P:antigen processing and presentation of endogenous peptide antigen via MHC class I via ER pathway, TAP-independent"/>
    <property type="evidence" value="ECO:0000318"/>
    <property type="project" value="GO_Central"/>
</dbReference>
<dbReference type="GO" id="GO:0002476">
    <property type="term" value="P:antigen processing and presentation of endogenous peptide antigen via MHC class Ib"/>
    <property type="evidence" value="ECO:0000318"/>
    <property type="project" value="GO_Central"/>
</dbReference>
<dbReference type="GO" id="GO:0006955">
    <property type="term" value="P:immune response"/>
    <property type="evidence" value="ECO:0000318"/>
    <property type="project" value="GO_Central"/>
</dbReference>
<dbReference type="GO" id="GO:0001916">
    <property type="term" value="P:positive regulation of T cell mediated cytotoxicity"/>
    <property type="evidence" value="ECO:0000318"/>
    <property type="project" value="GO_Central"/>
</dbReference>
<dbReference type="CDD" id="cd21010">
    <property type="entry name" value="IgC1_MHC-like_ZAG"/>
    <property type="match status" value="1"/>
</dbReference>
<dbReference type="FunFam" id="3.30.500.10:FF:000001">
    <property type="entry name" value="H-2 class I histocompatibility antigen, alpha chain"/>
    <property type="match status" value="1"/>
</dbReference>
<dbReference type="FunFam" id="2.60.40.10:FF:001703">
    <property type="entry name" value="Zinc-alpha-2-glycoprotein"/>
    <property type="match status" value="1"/>
</dbReference>
<dbReference type="Gene3D" id="2.60.40.10">
    <property type="entry name" value="Immunoglobulins"/>
    <property type="match status" value="1"/>
</dbReference>
<dbReference type="Gene3D" id="3.30.500.10">
    <property type="entry name" value="MHC class I-like antigen recognition-like"/>
    <property type="match status" value="1"/>
</dbReference>
<dbReference type="InterPro" id="IPR007110">
    <property type="entry name" value="Ig-like_dom"/>
</dbReference>
<dbReference type="InterPro" id="IPR036179">
    <property type="entry name" value="Ig-like_dom_sf"/>
</dbReference>
<dbReference type="InterPro" id="IPR013783">
    <property type="entry name" value="Ig-like_fold"/>
</dbReference>
<dbReference type="InterPro" id="IPR003006">
    <property type="entry name" value="Ig/MHC_CS"/>
</dbReference>
<dbReference type="InterPro" id="IPR003597">
    <property type="entry name" value="Ig_C1-set"/>
</dbReference>
<dbReference type="InterPro" id="IPR050208">
    <property type="entry name" value="MHC_class-I_related"/>
</dbReference>
<dbReference type="InterPro" id="IPR011161">
    <property type="entry name" value="MHC_I-like_Ag-recog"/>
</dbReference>
<dbReference type="InterPro" id="IPR037055">
    <property type="entry name" value="MHC_I-like_Ag-recog_sf"/>
</dbReference>
<dbReference type="InterPro" id="IPR011162">
    <property type="entry name" value="MHC_I/II-like_Ag-recog"/>
</dbReference>
<dbReference type="InterPro" id="IPR001039">
    <property type="entry name" value="MHC_I_a_a1/a2"/>
</dbReference>
<dbReference type="PANTHER" id="PTHR16675">
    <property type="entry name" value="MHC CLASS I-RELATED"/>
    <property type="match status" value="1"/>
</dbReference>
<dbReference type="PANTHER" id="PTHR16675:SF289">
    <property type="entry name" value="ZINC-ALPHA-2-GLYCOPROTEIN"/>
    <property type="match status" value="1"/>
</dbReference>
<dbReference type="Pfam" id="PF07654">
    <property type="entry name" value="C1-set"/>
    <property type="match status" value="1"/>
</dbReference>
<dbReference type="Pfam" id="PF00129">
    <property type="entry name" value="MHC_I"/>
    <property type="match status" value="1"/>
</dbReference>
<dbReference type="PRINTS" id="PR01638">
    <property type="entry name" value="MHCCLASSI"/>
</dbReference>
<dbReference type="SMART" id="SM00407">
    <property type="entry name" value="IGc1"/>
    <property type="match status" value="1"/>
</dbReference>
<dbReference type="SUPFAM" id="SSF48726">
    <property type="entry name" value="Immunoglobulin"/>
    <property type="match status" value="1"/>
</dbReference>
<dbReference type="SUPFAM" id="SSF54452">
    <property type="entry name" value="MHC antigen-recognition domain"/>
    <property type="match status" value="1"/>
</dbReference>
<dbReference type="PROSITE" id="PS50835">
    <property type="entry name" value="IG_LIKE"/>
    <property type="match status" value="1"/>
</dbReference>
<dbReference type="PROSITE" id="PS00290">
    <property type="entry name" value="IG_MHC"/>
    <property type="match status" value="1"/>
</dbReference>
<proteinExistence type="evidence at transcript level"/>
<keyword id="KW-1015">Disulfide bond</keyword>
<keyword id="KW-0325">Glycoprotein</keyword>
<keyword id="KW-1185">Reference proteome</keyword>
<keyword id="KW-0964">Secreted</keyword>
<keyword id="KW-0732">Signal</keyword>
<organism>
    <name type="scientific">Bos taurus</name>
    <name type="common">Bovine</name>
    <dbReference type="NCBI Taxonomy" id="9913"/>
    <lineage>
        <taxon>Eukaryota</taxon>
        <taxon>Metazoa</taxon>
        <taxon>Chordata</taxon>
        <taxon>Craniata</taxon>
        <taxon>Vertebrata</taxon>
        <taxon>Euteleostomi</taxon>
        <taxon>Mammalia</taxon>
        <taxon>Eutheria</taxon>
        <taxon>Laurasiatheria</taxon>
        <taxon>Artiodactyla</taxon>
        <taxon>Ruminantia</taxon>
        <taxon>Pecora</taxon>
        <taxon>Bovidae</taxon>
        <taxon>Bovinae</taxon>
        <taxon>Bos</taxon>
    </lineage>
</organism>